<dbReference type="EC" id="3.4.21.91"/>
<dbReference type="EC" id="3.6.1.15" evidence="11"/>
<dbReference type="EC" id="3.6.4.13" evidence="11"/>
<dbReference type="EC" id="2.1.1.56" evidence="18"/>
<dbReference type="EC" id="2.1.1.57" evidence="18"/>
<dbReference type="EC" id="2.7.7.48" evidence="14"/>
<dbReference type="EMBL" id="AY947539">
    <property type="protein sequence ID" value="AAX48017.1"/>
    <property type="molecule type" value="Genomic_RNA"/>
</dbReference>
<dbReference type="PDB" id="4AM0">
    <property type="method" value="X-ray"/>
    <property type="resolution" value="3.02 A"/>
    <property type="chains" value="Q/R/S/T=574-674"/>
</dbReference>
<dbReference type="PDB" id="7VMV">
    <property type="method" value="X-ray"/>
    <property type="resolution" value="3.35 A"/>
    <property type="chains" value="A/C/E/G=1392-1439"/>
</dbReference>
<dbReference type="PDB" id="8WBB">
    <property type="method" value="EM"/>
    <property type="resolution" value="2.90 A"/>
    <property type="chains" value="A/a=775-1126"/>
</dbReference>
<dbReference type="PDB" id="8WBC">
    <property type="method" value="EM"/>
    <property type="resolution" value="3.03 A"/>
    <property type="chains" value="A/B/a/b=775-1126"/>
</dbReference>
<dbReference type="PDB" id="8WBD">
    <property type="method" value="EM"/>
    <property type="resolution" value="2.90 A"/>
    <property type="chains" value="A/B/C/a/b/c=775-1126"/>
</dbReference>
<dbReference type="PDB" id="8WBE">
    <property type="method" value="EM"/>
    <property type="resolution" value="3.00 A"/>
    <property type="chains" value="A/B/C/a/b/c=775-1126"/>
</dbReference>
<dbReference type="PDBsum" id="4AM0"/>
<dbReference type="PDBsum" id="7VMV"/>
<dbReference type="PDBsum" id="8WBB"/>
<dbReference type="PDBsum" id="8WBC"/>
<dbReference type="PDBsum" id="8WBD"/>
<dbReference type="PDBsum" id="8WBE"/>
<dbReference type="BMRB" id="Q58HT7"/>
<dbReference type="EMDB" id="EMD-37419"/>
<dbReference type="EMDB" id="EMD-37420"/>
<dbReference type="EMDB" id="EMD-37421"/>
<dbReference type="EMDB" id="EMD-37422"/>
<dbReference type="SMR" id="Q58HT7"/>
<dbReference type="BindingDB" id="Q58HT7"/>
<dbReference type="MEROPS" id="S07.001"/>
<dbReference type="ABCD" id="Q58HT7">
    <property type="antibodies" value="4 sequenced antibodies"/>
</dbReference>
<dbReference type="EvolutionaryTrace" id="Q58HT7"/>
<dbReference type="PRO" id="PR:Q58HT7"/>
<dbReference type="Proteomes" id="UP000000275">
    <property type="component" value="Genome"/>
</dbReference>
<dbReference type="GO" id="GO:0005576">
    <property type="term" value="C:extracellular region"/>
    <property type="evidence" value="ECO:0007669"/>
    <property type="project" value="UniProtKB-SubCell"/>
</dbReference>
<dbReference type="GO" id="GO:0044167">
    <property type="term" value="C:host cell endoplasmic reticulum membrane"/>
    <property type="evidence" value="ECO:0007669"/>
    <property type="project" value="UniProtKB-SubCell"/>
</dbReference>
<dbReference type="GO" id="GO:0033650">
    <property type="term" value="C:host cell mitochondrion"/>
    <property type="evidence" value="ECO:0007669"/>
    <property type="project" value="UniProtKB-SubCell"/>
</dbReference>
<dbReference type="GO" id="GO:0042025">
    <property type="term" value="C:host cell nucleus"/>
    <property type="evidence" value="ECO:0007669"/>
    <property type="project" value="UniProtKB-SubCell"/>
</dbReference>
<dbReference type="GO" id="GO:0044220">
    <property type="term" value="C:host cell perinuclear region of cytoplasm"/>
    <property type="evidence" value="ECO:0007669"/>
    <property type="project" value="UniProtKB-SubCell"/>
</dbReference>
<dbReference type="GO" id="GO:0016020">
    <property type="term" value="C:membrane"/>
    <property type="evidence" value="ECO:0007669"/>
    <property type="project" value="UniProtKB-KW"/>
</dbReference>
<dbReference type="GO" id="GO:0019028">
    <property type="term" value="C:viral capsid"/>
    <property type="evidence" value="ECO:0007669"/>
    <property type="project" value="UniProtKB-KW"/>
</dbReference>
<dbReference type="GO" id="GO:0019031">
    <property type="term" value="C:viral envelope"/>
    <property type="evidence" value="ECO:0007669"/>
    <property type="project" value="UniProtKB-KW"/>
</dbReference>
<dbReference type="GO" id="GO:0055036">
    <property type="term" value="C:virion membrane"/>
    <property type="evidence" value="ECO:0007669"/>
    <property type="project" value="UniProtKB-SubCell"/>
</dbReference>
<dbReference type="GO" id="GO:0005524">
    <property type="term" value="F:ATP binding"/>
    <property type="evidence" value="ECO:0007669"/>
    <property type="project" value="UniProtKB-KW"/>
</dbReference>
<dbReference type="GO" id="GO:0016887">
    <property type="term" value="F:ATP hydrolysis activity"/>
    <property type="evidence" value="ECO:0007669"/>
    <property type="project" value="RHEA"/>
</dbReference>
<dbReference type="GO" id="GO:0015267">
    <property type="term" value="F:channel activity"/>
    <property type="evidence" value="ECO:0007669"/>
    <property type="project" value="UniProtKB-KW"/>
</dbReference>
<dbReference type="GO" id="GO:0003725">
    <property type="term" value="F:double-stranded RNA binding"/>
    <property type="evidence" value="ECO:0007669"/>
    <property type="project" value="InterPro"/>
</dbReference>
<dbReference type="GO" id="GO:0046872">
    <property type="term" value="F:metal ion binding"/>
    <property type="evidence" value="ECO:0007669"/>
    <property type="project" value="UniProtKB-KW"/>
</dbReference>
<dbReference type="GO" id="GO:0004483">
    <property type="term" value="F:mRNA (nucleoside-2'-O-)-methyltransferase activity"/>
    <property type="evidence" value="ECO:0007669"/>
    <property type="project" value="UniProtKB-EC"/>
</dbReference>
<dbReference type="GO" id="GO:0004482">
    <property type="term" value="F:mRNA 5'-cap (guanine-N7-)-methyltransferase activity"/>
    <property type="evidence" value="ECO:0007669"/>
    <property type="project" value="UniProtKB-EC"/>
</dbReference>
<dbReference type="GO" id="GO:0046983">
    <property type="term" value="F:protein dimerization activity"/>
    <property type="evidence" value="ECO:0007669"/>
    <property type="project" value="InterPro"/>
</dbReference>
<dbReference type="GO" id="GO:0003724">
    <property type="term" value="F:RNA helicase activity"/>
    <property type="evidence" value="ECO:0007669"/>
    <property type="project" value="UniProtKB-EC"/>
</dbReference>
<dbReference type="GO" id="GO:0003968">
    <property type="term" value="F:RNA-directed RNA polymerase activity"/>
    <property type="evidence" value="ECO:0007669"/>
    <property type="project" value="UniProtKB-KW"/>
</dbReference>
<dbReference type="GO" id="GO:0004252">
    <property type="term" value="F:serine-type endopeptidase activity"/>
    <property type="evidence" value="ECO:0007669"/>
    <property type="project" value="InterPro"/>
</dbReference>
<dbReference type="GO" id="GO:0005198">
    <property type="term" value="F:structural molecule activity"/>
    <property type="evidence" value="ECO:0007669"/>
    <property type="project" value="InterPro"/>
</dbReference>
<dbReference type="GO" id="GO:0075512">
    <property type="term" value="P:clathrin-dependent endocytosis of virus by host cell"/>
    <property type="evidence" value="ECO:0007669"/>
    <property type="project" value="UniProtKB-KW"/>
</dbReference>
<dbReference type="GO" id="GO:0039654">
    <property type="term" value="P:fusion of virus membrane with host endosome membrane"/>
    <property type="evidence" value="ECO:0007669"/>
    <property type="project" value="UniProtKB-KW"/>
</dbReference>
<dbReference type="GO" id="GO:0034220">
    <property type="term" value="P:monoatomic ion transmembrane transport"/>
    <property type="evidence" value="ECO:0007669"/>
    <property type="project" value="UniProtKB-KW"/>
</dbReference>
<dbReference type="GO" id="GO:0006508">
    <property type="term" value="P:proteolysis"/>
    <property type="evidence" value="ECO:0007669"/>
    <property type="project" value="UniProtKB-KW"/>
</dbReference>
<dbReference type="GO" id="GO:0039520">
    <property type="term" value="P:symbiont-mediated activation of host autophagy"/>
    <property type="evidence" value="ECO:0007669"/>
    <property type="project" value="UniProtKB-KW"/>
</dbReference>
<dbReference type="GO" id="GO:0039545">
    <property type="term" value="P:symbiont-mediated suppression of host cytoplasmic pattern recognition receptor signaling pathway via inhibition of MAVS activity"/>
    <property type="evidence" value="ECO:0007669"/>
    <property type="project" value="UniProtKB-KW"/>
</dbReference>
<dbReference type="GO" id="GO:0039574">
    <property type="term" value="P:symbiont-mediated suppression of host JAK-STAT cascade via inhibition of host TYK2 activity"/>
    <property type="evidence" value="ECO:0007669"/>
    <property type="project" value="UniProtKB-KW"/>
</dbReference>
<dbReference type="GO" id="GO:0039564">
    <property type="term" value="P:symbiont-mediated suppression of host JAK-STAT cascade via inhibition of STAT2 activity"/>
    <property type="evidence" value="ECO:0007669"/>
    <property type="project" value="UniProtKB-KW"/>
</dbReference>
<dbReference type="GO" id="GO:0039502">
    <property type="term" value="P:symbiont-mediated suppression of host type I interferon-mediated signaling pathway"/>
    <property type="evidence" value="ECO:0007669"/>
    <property type="project" value="UniProtKB-KW"/>
</dbReference>
<dbReference type="GO" id="GO:0039694">
    <property type="term" value="P:viral RNA genome replication"/>
    <property type="evidence" value="ECO:0007669"/>
    <property type="project" value="InterPro"/>
</dbReference>
<dbReference type="GO" id="GO:0019062">
    <property type="term" value="P:virion attachment to host cell"/>
    <property type="evidence" value="ECO:0007669"/>
    <property type="project" value="UniProtKB-KW"/>
</dbReference>
<dbReference type="CDD" id="cd20761">
    <property type="entry name" value="capping_2-OMTase_Flaviviridae"/>
    <property type="match status" value="1"/>
</dbReference>
<dbReference type="CDD" id="cd17931">
    <property type="entry name" value="DEXHc_viral_Ns3"/>
    <property type="match status" value="1"/>
</dbReference>
<dbReference type="CDD" id="cd12149">
    <property type="entry name" value="Flavi_E_C"/>
    <property type="match status" value="1"/>
</dbReference>
<dbReference type="CDD" id="cd17038">
    <property type="entry name" value="Flavi_M"/>
    <property type="match status" value="1"/>
</dbReference>
<dbReference type="CDD" id="cd23204">
    <property type="entry name" value="Flavivirus_RdRp"/>
    <property type="match status" value="1"/>
</dbReference>
<dbReference type="CDD" id="cd18806">
    <property type="entry name" value="SF2_C_viral"/>
    <property type="match status" value="1"/>
</dbReference>
<dbReference type="FunFam" id="1.20.1280.260:FF:000001">
    <property type="entry name" value="Envelope glycoprotein"/>
    <property type="match status" value="1"/>
</dbReference>
<dbReference type="FunFam" id="2.60.40.350:FF:000001">
    <property type="entry name" value="Envelope glycoprotein"/>
    <property type="match status" value="1"/>
</dbReference>
<dbReference type="FunFam" id="1.10.10.930:FF:000001">
    <property type="entry name" value="Genome polyprotein"/>
    <property type="match status" value="1"/>
</dbReference>
<dbReference type="FunFam" id="1.10.260.90:FF:000001">
    <property type="entry name" value="Genome polyprotein"/>
    <property type="match status" value="1"/>
</dbReference>
<dbReference type="FunFam" id="1.10.8.970:FF:000002">
    <property type="entry name" value="Genome polyprotein"/>
    <property type="match status" value="1"/>
</dbReference>
<dbReference type="FunFam" id="2.40.10.120:FF:000008">
    <property type="entry name" value="Genome polyprotein"/>
    <property type="match status" value="1"/>
</dbReference>
<dbReference type="FunFam" id="2.60.260.50:FF:000001">
    <property type="entry name" value="Genome polyprotein"/>
    <property type="match status" value="1"/>
</dbReference>
<dbReference type="FunFam" id="3.30.70.2840:FF:000001">
    <property type="entry name" value="Genome polyprotein"/>
    <property type="match status" value="1"/>
</dbReference>
<dbReference type="FunFam" id="3.30.70.2840:FF:000002">
    <property type="entry name" value="Genome polyprotein"/>
    <property type="match status" value="1"/>
</dbReference>
<dbReference type="FunFam" id="3.30.70.2840:FF:000004">
    <property type="entry name" value="Genome polyprotein"/>
    <property type="match status" value="1"/>
</dbReference>
<dbReference type="FunFam" id="3.40.50.150:FF:000105">
    <property type="entry name" value="Genome polyprotein"/>
    <property type="match status" value="1"/>
</dbReference>
<dbReference type="FunFam" id="3.40.50.300:FF:000763">
    <property type="entry name" value="Genome polyprotein"/>
    <property type="match status" value="1"/>
</dbReference>
<dbReference type="Gene3D" id="1.10.10.930">
    <property type="match status" value="1"/>
</dbReference>
<dbReference type="Gene3D" id="1.10.260.90">
    <property type="match status" value="1"/>
</dbReference>
<dbReference type="Gene3D" id="1.20.1280.260">
    <property type="match status" value="1"/>
</dbReference>
<dbReference type="Gene3D" id="2.40.10.120">
    <property type="match status" value="2"/>
</dbReference>
<dbReference type="Gene3D" id="2.60.40.350">
    <property type="match status" value="1"/>
</dbReference>
<dbReference type="Gene3D" id="1.10.8.970">
    <property type="entry name" value="Flavivirus envelope glycoprotein M-like"/>
    <property type="match status" value="1"/>
</dbReference>
<dbReference type="Gene3D" id="2.60.260.50">
    <property type="entry name" value="Flavivirus polyprotein propeptide domain"/>
    <property type="match status" value="1"/>
</dbReference>
<dbReference type="Gene3D" id="3.30.70.2840">
    <property type="entry name" value="Flavivirus RNA-directed RNA polymerase, thumb domain"/>
    <property type="match status" value="3"/>
</dbReference>
<dbReference type="Gene3D" id="3.40.50.300">
    <property type="entry name" value="P-loop containing nucleotide triphosphate hydrolases"/>
    <property type="match status" value="2"/>
</dbReference>
<dbReference type="Gene3D" id="2.60.98.10">
    <property type="entry name" value="Tick-borne Encephalitis virus Glycoprotein, domain 1"/>
    <property type="match status" value="1"/>
</dbReference>
<dbReference type="Gene3D" id="2.40.10.10">
    <property type="entry name" value="Trypsin-like serine proteases"/>
    <property type="match status" value="1"/>
</dbReference>
<dbReference type="Gene3D" id="3.40.50.150">
    <property type="entry name" value="Vaccinia Virus protein VP39"/>
    <property type="match status" value="1"/>
</dbReference>
<dbReference type="Gene3D" id="3.30.67.10">
    <property type="entry name" value="Viral Envelope Glycoprotein, domain 2"/>
    <property type="match status" value="1"/>
</dbReference>
<dbReference type="Gene3D" id="3.30.387.10">
    <property type="entry name" value="Viral Envelope Glycoprotein, domain 3"/>
    <property type="match status" value="1"/>
</dbReference>
<dbReference type="InterPro" id="IPR043502">
    <property type="entry name" value="DNA/RNA_pol_sf"/>
</dbReference>
<dbReference type="InterPro" id="IPR000069">
    <property type="entry name" value="Env_glycoprot_M_flavivir"/>
</dbReference>
<dbReference type="InterPro" id="IPR038302">
    <property type="entry name" value="Env_glycoprot_M_sf_flavivir"/>
</dbReference>
<dbReference type="InterPro" id="IPR013755">
    <property type="entry name" value="Flav_gly_cen_dom_subdom1"/>
</dbReference>
<dbReference type="InterPro" id="IPR001122">
    <property type="entry name" value="Flavi_capsidC"/>
</dbReference>
<dbReference type="InterPro" id="IPR037172">
    <property type="entry name" value="Flavi_capsidC_sf"/>
</dbReference>
<dbReference type="InterPro" id="IPR011492">
    <property type="entry name" value="Flavi_DEAD"/>
</dbReference>
<dbReference type="InterPro" id="IPR027287">
    <property type="entry name" value="Flavi_E_Ig-like"/>
</dbReference>
<dbReference type="InterPro" id="IPR026470">
    <property type="entry name" value="Flavi_E_Stem/Anchor_dom"/>
</dbReference>
<dbReference type="InterPro" id="IPR038345">
    <property type="entry name" value="Flavi_E_Stem/Anchor_dom_sf"/>
</dbReference>
<dbReference type="InterPro" id="IPR011998">
    <property type="entry name" value="Flavi_Glycoprot_E_cen/dimer"/>
</dbReference>
<dbReference type="InterPro" id="IPR001157">
    <property type="entry name" value="Flavi_NS1"/>
</dbReference>
<dbReference type="InterPro" id="IPR000752">
    <property type="entry name" value="Flavi_NS2A"/>
</dbReference>
<dbReference type="InterPro" id="IPR000487">
    <property type="entry name" value="Flavi_NS2B"/>
</dbReference>
<dbReference type="InterPro" id="IPR001850">
    <property type="entry name" value="Flavi_NS3_S7"/>
</dbReference>
<dbReference type="InterPro" id="IPR000404">
    <property type="entry name" value="Flavi_NS4A"/>
</dbReference>
<dbReference type="InterPro" id="IPR001528">
    <property type="entry name" value="Flavi_NS4B"/>
</dbReference>
<dbReference type="InterPro" id="IPR046811">
    <property type="entry name" value="Flavi_NS5_thumb"/>
</dbReference>
<dbReference type="InterPro" id="IPR002535">
    <property type="entry name" value="Flavi_propep"/>
</dbReference>
<dbReference type="InterPro" id="IPR038688">
    <property type="entry name" value="Flavi_propep_sf"/>
</dbReference>
<dbReference type="InterPro" id="IPR047530">
    <property type="entry name" value="Flavi_RdRp"/>
</dbReference>
<dbReference type="InterPro" id="IPR000208">
    <property type="entry name" value="Flavi_RdRp_fingers/palm"/>
</dbReference>
<dbReference type="InterPro" id="IPR000336">
    <property type="entry name" value="Flavivir/Alphavir_Ig-like_sf"/>
</dbReference>
<dbReference type="InterPro" id="IPR014412">
    <property type="entry name" value="Gen_Poly_FLV"/>
</dbReference>
<dbReference type="InterPro" id="IPR036253">
    <property type="entry name" value="Glycoprot_cen/dimer_sf"/>
</dbReference>
<dbReference type="InterPro" id="IPR038055">
    <property type="entry name" value="Glycoprot_E_dimer_dom"/>
</dbReference>
<dbReference type="InterPro" id="IPR013756">
    <property type="entry name" value="GlyE_cen_dom_subdom2"/>
</dbReference>
<dbReference type="InterPro" id="IPR014001">
    <property type="entry name" value="Helicase_ATP-bd"/>
</dbReference>
<dbReference type="InterPro" id="IPR001650">
    <property type="entry name" value="Helicase_C-like"/>
</dbReference>
<dbReference type="InterPro" id="IPR014756">
    <property type="entry name" value="Ig_E-set"/>
</dbReference>
<dbReference type="InterPro" id="IPR026490">
    <property type="entry name" value="mRNA_cap_0/1_MeTrfase"/>
</dbReference>
<dbReference type="InterPro" id="IPR049486">
    <property type="entry name" value="NS3-hel_C_flaviviridae"/>
</dbReference>
<dbReference type="InterPro" id="IPR027417">
    <property type="entry name" value="P-loop_NTPase"/>
</dbReference>
<dbReference type="InterPro" id="IPR009003">
    <property type="entry name" value="Peptidase_S1_PA"/>
</dbReference>
<dbReference type="InterPro" id="IPR043504">
    <property type="entry name" value="Peptidase_S1_PA_chymotrypsin"/>
</dbReference>
<dbReference type="InterPro" id="IPR007094">
    <property type="entry name" value="RNA-dir_pol_PSvirus"/>
</dbReference>
<dbReference type="InterPro" id="IPR002877">
    <property type="entry name" value="RNA_MeTrfase_FtsJ_dom"/>
</dbReference>
<dbReference type="InterPro" id="IPR029063">
    <property type="entry name" value="SAM-dependent_MTases_sf"/>
</dbReference>
<dbReference type="NCBIfam" id="TIGR04240">
    <property type="entry name" value="flavi_E_stem"/>
    <property type="match status" value="1"/>
</dbReference>
<dbReference type="Pfam" id="PF20907">
    <property type="entry name" value="Flav_NS3-hel_C"/>
    <property type="match status" value="1"/>
</dbReference>
<dbReference type="Pfam" id="PF01003">
    <property type="entry name" value="Flavi_capsid"/>
    <property type="match status" value="1"/>
</dbReference>
<dbReference type="Pfam" id="PF07652">
    <property type="entry name" value="Flavi_DEAD"/>
    <property type="match status" value="1"/>
</dbReference>
<dbReference type="Pfam" id="PF21659">
    <property type="entry name" value="Flavi_E_stem"/>
    <property type="match status" value="1"/>
</dbReference>
<dbReference type="Pfam" id="PF02832">
    <property type="entry name" value="Flavi_glycop_C"/>
    <property type="match status" value="1"/>
</dbReference>
<dbReference type="Pfam" id="PF00869">
    <property type="entry name" value="Flavi_glycoprot"/>
    <property type="match status" value="1"/>
</dbReference>
<dbReference type="Pfam" id="PF01004">
    <property type="entry name" value="Flavi_M"/>
    <property type="match status" value="1"/>
</dbReference>
<dbReference type="Pfam" id="PF00948">
    <property type="entry name" value="Flavi_NS1"/>
    <property type="match status" value="1"/>
</dbReference>
<dbReference type="Pfam" id="PF01005">
    <property type="entry name" value="Flavi_NS2A"/>
    <property type="match status" value="1"/>
</dbReference>
<dbReference type="Pfam" id="PF01002">
    <property type="entry name" value="Flavi_NS2B"/>
    <property type="match status" value="1"/>
</dbReference>
<dbReference type="Pfam" id="PF01350">
    <property type="entry name" value="Flavi_NS4A"/>
    <property type="match status" value="1"/>
</dbReference>
<dbReference type="Pfam" id="PF01349">
    <property type="entry name" value="Flavi_NS4B"/>
    <property type="match status" value="1"/>
</dbReference>
<dbReference type="Pfam" id="PF00972">
    <property type="entry name" value="Flavi_NS5"/>
    <property type="match status" value="1"/>
</dbReference>
<dbReference type="Pfam" id="PF20483">
    <property type="entry name" value="Flavi_NS5_thumb"/>
    <property type="match status" value="1"/>
</dbReference>
<dbReference type="Pfam" id="PF01570">
    <property type="entry name" value="Flavi_propep"/>
    <property type="match status" value="1"/>
</dbReference>
<dbReference type="Pfam" id="PF01728">
    <property type="entry name" value="FtsJ"/>
    <property type="match status" value="1"/>
</dbReference>
<dbReference type="Pfam" id="PF00949">
    <property type="entry name" value="Peptidase_S7"/>
    <property type="match status" value="1"/>
</dbReference>
<dbReference type="PIRSF" id="PIRSF003817">
    <property type="entry name" value="Gen_Poly_FLV"/>
    <property type="match status" value="1"/>
</dbReference>
<dbReference type="SMART" id="SM00487">
    <property type="entry name" value="DEXDc"/>
    <property type="match status" value="1"/>
</dbReference>
<dbReference type="SMART" id="SM00490">
    <property type="entry name" value="HELICc"/>
    <property type="match status" value="1"/>
</dbReference>
<dbReference type="SUPFAM" id="SSF56672">
    <property type="entry name" value="DNA/RNA polymerases"/>
    <property type="match status" value="1"/>
</dbReference>
<dbReference type="SUPFAM" id="SSF81296">
    <property type="entry name" value="E set domains"/>
    <property type="match status" value="1"/>
</dbReference>
<dbReference type="SUPFAM" id="SSF101257">
    <property type="entry name" value="Flavivirus capsid protein C"/>
    <property type="match status" value="1"/>
</dbReference>
<dbReference type="SUPFAM" id="SSF52540">
    <property type="entry name" value="P-loop containing nucleoside triphosphate hydrolases"/>
    <property type="match status" value="2"/>
</dbReference>
<dbReference type="SUPFAM" id="SSF53335">
    <property type="entry name" value="S-adenosyl-L-methionine-dependent methyltransferases"/>
    <property type="match status" value="1"/>
</dbReference>
<dbReference type="SUPFAM" id="SSF50494">
    <property type="entry name" value="Trypsin-like serine proteases"/>
    <property type="match status" value="1"/>
</dbReference>
<dbReference type="SUPFAM" id="SSF56983">
    <property type="entry name" value="Viral glycoprotein, central and dimerisation domains"/>
    <property type="match status" value="1"/>
</dbReference>
<dbReference type="PROSITE" id="PS51527">
    <property type="entry name" value="FLAVIVIRUS_NS2B"/>
    <property type="match status" value="1"/>
</dbReference>
<dbReference type="PROSITE" id="PS51528">
    <property type="entry name" value="FLAVIVIRUS_NS3PRO"/>
    <property type="match status" value="1"/>
</dbReference>
<dbReference type="PROSITE" id="PS51192">
    <property type="entry name" value="HELICASE_ATP_BIND_1"/>
    <property type="match status" value="1"/>
</dbReference>
<dbReference type="PROSITE" id="PS51194">
    <property type="entry name" value="HELICASE_CTER"/>
    <property type="match status" value="1"/>
</dbReference>
<dbReference type="PROSITE" id="PS50507">
    <property type="entry name" value="RDRP_SSRNA_POS"/>
    <property type="match status" value="1"/>
</dbReference>
<dbReference type="PROSITE" id="PS51591">
    <property type="entry name" value="RNA_CAP01_NS5_MT"/>
    <property type="match status" value="1"/>
</dbReference>
<comment type="function">
    <molecule>Capsid protein C</molecule>
    <text evidence="6">Plays a role in virus budding by binding to the cell membrane and gathering the viral RNA into a nucleocapsid that forms the core of a mature virus particle. During virus entry, may induce genome penetration into the host cytoplasm after hemifusion induced by the surface proteins. Can migrate to the cell nucleus where it modulates host functions. Overcomes the anti-viral effects of host EXOC1 by sequestering and degrading the latter through the proteasome degradation pathway.</text>
</comment>
<comment type="function">
    <molecule>Capsid protein C</molecule>
    <text evidence="1">Inhibits RNA silencing by interfering with host Dicer.</text>
</comment>
<comment type="function">
    <molecule>Peptide pr</molecule>
    <text evidence="6">Prevents premature fusion activity of envelope proteins in trans-Golgi by binding to envelope protein E at pH6.0. After virion release in extracellular space, gets dissociated from E dimers.</text>
</comment>
<comment type="function">
    <molecule>Protein prM</molecule>
    <text evidence="6">Acts as a chaperone for envelope protein E during intracellular virion assembly by masking and inactivating envelope protein E fusion peptide. prM is the only viral peptide matured by host furin in the trans-Golgi network probably to avoid catastrophic activation of the viral fusion activity in acidic Golgi compartment prior to virion release. prM-E cleavage is inefficient, and many virions are only partially matured. These uncleaved prM would play a role in immune evasion.</text>
</comment>
<comment type="function">
    <molecule>Small envelope protein M</molecule>
    <text evidence="6">May play a role in virus budding. Exerts cytotoxic effects by activating a mitochondrial apoptotic pathway through M ectodomain. May display a viroporin activity.</text>
</comment>
<comment type="function">
    <molecule>Envelope protein E</molecule>
    <text evidence="6">Binds to host cell surface receptor and mediates fusion between viral and cellular membranes. Envelope protein is synthesized in the endoplasmic reticulum in the form of heterodimer with protein prM. They play a role in virion budding in the ER, and the newly formed immature particle is covered with 60 spikes composed of heterodimer between precursor prM and envelope protein E. The virion is transported to the Golgi apparatus where the low pH causes dissociation of PrM-E heterodimers and formation of E homodimers. prM-E cleavage is inefficient, and many virions are only partially matured. These uncleaved prM would play a role in immune evasion.</text>
</comment>
<comment type="function">
    <molecule>Non-structural protein 1</molecule>
    <text evidence="11">Involved in immune evasion, pathogenesis and viral replication. Once cleaved off the polyprotein, is targeted to three destinations: the viral replication cycle, the plasma membrane and the extracellular compartment. Essential for viral replication. Required for formation of the replication complex and recruitment of other non-structural proteins to the ER-derived membrane structures. Excreted as a hexameric lipoparticle that plays a role against host immune response. Antagonizing the complement function. Binds to the host macrophages and dendritic cells. Inhibits signal transduction originating from Toll-like receptor 3 (TLR3).</text>
</comment>
<comment type="function">
    <molecule>Non-structural protein 1</molecule>
    <text evidence="6">Disrupts the host endothelial glycocalyx layer of host pulmonary microvascular endothelial cells, inducing degradation of sialic acid and shedding of heparan sulfate proteoglycans. NS1 induces expression of sialidases, heparanase, and activates cathepsin L, which activates heparanase via enzymatic cleavage. These effects are probably linked to the endothelial hyperpermeability observed in severe dengue disease.</text>
</comment>
<comment type="function">
    <molecule>Non-structural protein 2A</molecule>
    <text evidence="6">Component of the viral RNA replication complex that functions in virion assembly and antagonizes the host immune response.</text>
</comment>
<comment type="function">
    <molecule>Serine protease subunit NS2B</molecule>
    <text evidence="6 16">Required cofactor for the serine protease function of NS3. May have membrane-destabilizing activity and form viroporins (By similarity).</text>
</comment>
<comment type="function">
    <molecule>Serine protease NS3</molecule>
    <text evidence="17">Displays three enzymatic activities: serine protease, NTPase and RNA helicase. NS3 serine protease, in association with NS2B, performs its autocleavage and cleaves the polyprotein at dibasic sites in the cytoplasm: C-prM, NS2A-NS2B, NS2B-NS3, NS3-NS4A, NS4A-2K and NS4B-NS5. NS3 RNA helicase binds RNA and unwinds dsRNA in the 3' to 5' direction.</text>
</comment>
<comment type="function">
    <molecule>Non-structural protein 4A</molecule>
    <text evidence="6 8 11">Regulates the ATPase activity of the NS3 helicase activity. NS4A allows NS3 helicase to conserve energy during unwinding. Plays a role in the inhibition of the host innate immune response. Interacts with host MAVS and thereby prevents the interaction between RIGI and MAVS. In turn, IFN-beta production is impaired. Interacts with host AUP1 which mediates induction of lipophagy in host cells and facilitates production of virus progeny particles (By similarity).</text>
</comment>
<comment type="function">
    <molecule>Peptide 2k</molecule>
    <text evidence="6">Functions as a signal peptide for NS4B and is required for the interferon antagonism activity of the latter.</text>
</comment>
<comment type="function">
    <molecule>Non-structural protein 4B</molecule>
    <text evidence="11">Induces the formation of ER-derived membrane vesicles where the viral replication takes place. Inhibits interferon (IFN)-induced host STAT1 phosphorylation and nuclear translocation, thereby preventing the establishment of cellular antiviral state by blocking the IFN-alpha/beta pathway.</text>
</comment>
<comment type="function">
    <molecule>RNA-directed RNA polymerase NS5</molecule>
    <text evidence="2 6">Replicates the viral (+) and (-) RNA genome, and performs the capping of genomes in the cytoplasm. NS5 methylates viral RNA cap at guanine N-7 and ribose 2'-O positions. Besides its role in RNA genome replication, also prevents the establishment of cellular antiviral state by blocking the interferon-alpha/beta (IFN-alpha/beta) signaling pathway. Inhibits host TYK2 and STAT2 phosphorylation, thereby preventing activation of JAK-STAT signaling pathway (By similarity). May reduce immune responses by preventing the recruitment of the host PAF1 complex to interferon-responsive genes (By similarity).</text>
</comment>
<comment type="catalytic activity">
    <reaction>
        <text>Selective hydrolysis of -Xaa-Xaa-|-Yaa- bonds in which each of the Xaa can be either Arg or Lys and Yaa can be either Ser or Ala.</text>
        <dbReference type="EC" id="3.4.21.91"/>
    </reaction>
</comment>
<comment type="catalytic activity">
    <reaction evidence="14">
        <text>RNA(n) + a ribonucleoside 5'-triphosphate = RNA(n+1) + diphosphate</text>
        <dbReference type="Rhea" id="RHEA:21248"/>
        <dbReference type="Rhea" id="RHEA-COMP:14527"/>
        <dbReference type="Rhea" id="RHEA-COMP:17342"/>
        <dbReference type="ChEBI" id="CHEBI:33019"/>
        <dbReference type="ChEBI" id="CHEBI:61557"/>
        <dbReference type="ChEBI" id="CHEBI:140395"/>
        <dbReference type="EC" id="2.7.7.48"/>
    </reaction>
</comment>
<comment type="catalytic activity">
    <reaction>
        <text>a ribonucleoside 5'-triphosphate + H2O = a ribonucleoside 5'-diphosphate + phosphate + H(+)</text>
        <dbReference type="Rhea" id="RHEA:23680"/>
        <dbReference type="ChEBI" id="CHEBI:15377"/>
        <dbReference type="ChEBI" id="CHEBI:15378"/>
        <dbReference type="ChEBI" id="CHEBI:43474"/>
        <dbReference type="ChEBI" id="CHEBI:57930"/>
        <dbReference type="ChEBI" id="CHEBI:61557"/>
        <dbReference type="EC" id="3.6.1.15"/>
    </reaction>
</comment>
<comment type="catalytic activity">
    <reaction>
        <text>ATP + H2O = ADP + phosphate + H(+)</text>
        <dbReference type="Rhea" id="RHEA:13065"/>
        <dbReference type="ChEBI" id="CHEBI:15377"/>
        <dbReference type="ChEBI" id="CHEBI:15378"/>
        <dbReference type="ChEBI" id="CHEBI:30616"/>
        <dbReference type="ChEBI" id="CHEBI:43474"/>
        <dbReference type="ChEBI" id="CHEBI:456216"/>
        <dbReference type="EC" id="3.6.4.13"/>
    </reaction>
</comment>
<comment type="catalytic activity">
    <reaction evidence="18">
        <text>a 5'-end (5'-triphosphoguanosine)-ribonucleoside in mRNA + S-adenosyl-L-methionine = a 5'-end (N(7)-methyl 5'-triphosphoguanosine)-ribonucleoside in mRNA + S-adenosyl-L-homocysteine</text>
        <dbReference type="Rhea" id="RHEA:67008"/>
        <dbReference type="Rhea" id="RHEA-COMP:17166"/>
        <dbReference type="Rhea" id="RHEA-COMP:17167"/>
        <dbReference type="ChEBI" id="CHEBI:57856"/>
        <dbReference type="ChEBI" id="CHEBI:59789"/>
        <dbReference type="ChEBI" id="CHEBI:156461"/>
        <dbReference type="ChEBI" id="CHEBI:167617"/>
        <dbReference type="EC" id="2.1.1.56"/>
    </reaction>
</comment>
<comment type="catalytic activity">
    <reaction evidence="18">
        <text>a 5'-end (N(7)-methyl 5'-triphosphoguanosine)-ribonucleoside in mRNA + S-adenosyl-L-methionine = a 5'-end (N(7)-methyl 5'-triphosphoguanosine)-(2'-O-methyl-ribonucleoside) in mRNA + S-adenosyl-L-homocysteine + H(+)</text>
        <dbReference type="Rhea" id="RHEA:67020"/>
        <dbReference type="Rhea" id="RHEA-COMP:17167"/>
        <dbReference type="Rhea" id="RHEA-COMP:17168"/>
        <dbReference type="ChEBI" id="CHEBI:15378"/>
        <dbReference type="ChEBI" id="CHEBI:57856"/>
        <dbReference type="ChEBI" id="CHEBI:59789"/>
        <dbReference type="ChEBI" id="CHEBI:156461"/>
        <dbReference type="ChEBI" id="CHEBI:167609"/>
        <dbReference type="EC" id="2.1.1.57"/>
    </reaction>
</comment>
<comment type="subunit">
    <molecule>Capsid protein C</molecule>
    <text evidence="6">Homodimer. Interacts (via N-terminus) with host EXOC1 (via C-terminus); this interaction results in EXOC1 degradation through the proteasome degradation pathway.</text>
</comment>
<comment type="subunit">
    <molecule>Protein prM</molecule>
    <text evidence="6">Forms heterodimers with envelope protein E in the endoplasmic reticulum and Golgi.</text>
</comment>
<comment type="subunit">
    <molecule>Envelope protein E</molecule>
    <text evidence="6">Homodimer; in the endoplasmic reticulum and Golgi. Interacts with protein prM. Interacts with non-structural protein 1.</text>
</comment>
<comment type="subunit">
    <molecule>Non-structural protein 1</molecule>
    <text evidence="6">Homodimer; Homohexamer when secreted. Interacts with envelope protein E.</text>
</comment>
<comment type="subunit">
    <molecule>Non-structural protein 2A</molecule>
    <text evidence="6">Interacts (via N-terminus) with serine protease NS3.</text>
</comment>
<comment type="subunit">
    <molecule>Serine protease subunit NS2B</molecule>
    <text evidence="6">Forms a heterodimer with serine protease NS3. May form homooligomers.</text>
</comment>
<comment type="subunit">
    <molecule>Serine protease NS3</molecule>
    <text evidence="6">Forms a heterodimer with NS2B. Interacts with NS4B. Interacts with unphosphorylated RNA-directed RNA polymerase NS5; this interaction stimulates RNA-directed RNA polymerase NS5 guanylyltransferase activity.</text>
</comment>
<comment type="subunit">
    <molecule>Non-structural protein 4A</molecule>
    <text evidence="6 8">Interacts with host MAVS; this interaction inhibits the synthesis of IFN-beta. Interacts with host AUP1; the interaction occurs in the presence of Dengue virus NS4B and induces lipophagy which facilitates production of virus progeny particles (By similarity).</text>
</comment>
<comment type="subunit">
    <molecule>Non-structural protein 4B</molecule>
    <text evidence="6">Interacts with serine protease NS3.</text>
</comment>
<comment type="subunit">
    <molecule>RNA-directed RNA polymerase NS5</molecule>
    <text evidence="2 6">Homodimer. Interacts with host STAT2; this interaction inhibits the phosphorylation of the latter, and, when all viral proteins are present (polyprotein), targets STAT2 for degradation. Interacts with serine protease NS3 (By similarity). Interacts with host PAF1 complex; the interaction may prevent the recruitment of the PAF1 complex to interferon-responsive genes, and thus reduces the immune response (By similarity).</text>
</comment>
<comment type="subcellular location">
    <molecule>Capsid protein C</molecule>
    <subcellularLocation>
        <location evidence="6">Virion</location>
    </subcellularLocation>
    <subcellularLocation>
        <location evidence="6">Host nucleus</location>
    </subcellularLocation>
    <subcellularLocation>
        <location evidence="6">Host cytoplasm</location>
    </subcellularLocation>
    <subcellularLocation>
        <location evidence="6">Host cytoplasm</location>
        <location evidence="6">Host perinuclear region</location>
    </subcellularLocation>
</comment>
<comment type="subcellular location">
    <molecule>Peptide pr</molecule>
    <subcellularLocation>
        <location evidence="6">Secreted</location>
    </subcellularLocation>
</comment>
<comment type="subcellular location">
    <molecule>Small envelope protein M</molecule>
    <subcellularLocation>
        <location evidence="6">Virion membrane</location>
        <topology evidence="12">Multi-pass membrane protein</topology>
    </subcellularLocation>
    <subcellularLocation>
        <location evidence="6">Host endoplasmic reticulum membrane</location>
        <topology evidence="12">Multi-pass membrane protein</topology>
    </subcellularLocation>
</comment>
<comment type="subcellular location">
    <molecule>Envelope protein E</molecule>
    <subcellularLocation>
        <location evidence="6">Virion membrane</location>
        <topology evidence="12">Multi-pass membrane protein</topology>
    </subcellularLocation>
    <subcellularLocation>
        <location evidence="6">Host endoplasmic reticulum membrane</location>
        <topology evidence="12">Multi-pass membrane protein</topology>
    </subcellularLocation>
</comment>
<comment type="subcellular location">
    <molecule>Non-structural protein 1</molecule>
    <subcellularLocation>
        <location evidence="6">Secreted</location>
    </subcellularLocation>
    <subcellularLocation>
        <location>Host endoplasmic reticulum membrane</location>
        <topology>Peripheral membrane protein</topology>
        <orientation evidence="6">Lumenal side</orientation>
    </subcellularLocation>
    <text evidence="11">Located in RE-derived vesicles hosting the replication complex.</text>
</comment>
<comment type="subcellular location">
    <molecule>Non-structural protein 2A</molecule>
    <subcellularLocation>
        <location evidence="6">Host endoplasmic reticulum membrane</location>
        <topology evidence="6">Multi-pass membrane protein</topology>
    </subcellularLocation>
</comment>
<comment type="subcellular location">
    <molecule>Serine protease subunit NS2B</molecule>
    <subcellularLocation>
        <location>Host endoplasmic reticulum membrane</location>
        <topology evidence="6">Multi-pass membrane protein</topology>
    </subcellularLocation>
</comment>
<comment type="subcellular location">
    <molecule>Serine protease NS3</molecule>
    <subcellularLocation>
        <location evidence="17">Host endoplasmic reticulum membrane</location>
        <topology evidence="17">Peripheral membrane protein</topology>
        <orientation evidence="17">Cytoplasmic side</orientation>
    </subcellularLocation>
    <text evidence="17">Remains non-covalently associated to serine protease subunit NS2B.</text>
</comment>
<comment type="subcellular location">
    <molecule>Non-structural protein 4A</molecule>
    <subcellularLocation>
        <location evidence="6">Host endoplasmic reticulum membrane</location>
        <topology evidence="6">Multi-pass membrane protein</topology>
    </subcellularLocation>
    <subcellularLocation>
        <location evidence="6">Host mitochondrion</location>
    </subcellularLocation>
    <text evidence="6">Located in RE-associated vesicles hosting the replication complex. Interacts with host MAVS in the mitochondrion-associated endoplasmic reticulum membranes.</text>
</comment>
<comment type="subcellular location">
    <molecule>Non-structural protein 4B</molecule>
    <subcellularLocation>
        <location evidence="6">Host endoplasmic reticulum membrane</location>
        <topology evidence="6">Multi-pass membrane protein</topology>
    </subcellularLocation>
    <text evidence="11">Located in RE-derived vesicles hosting the replication complex.</text>
</comment>
<comment type="subcellular location">
    <molecule>RNA-directed RNA polymerase NS5</molecule>
    <subcellularLocation>
        <location>Host endoplasmic reticulum membrane</location>
        <topology>Peripheral membrane protein</topology>
        <orientation>Cytoplasmic side</orientation>
    </subcellularLocation>
    <subcellularLocation>
        <location evidence="2 6">Host nucleus</location>
    </subcellularLocation>
    <text evidence="6">Located in RE-associated vesicles hosting the replication complex. NS5 protein is mainly localized in the nucleus rather than in ER vesicles, especially in the DENV 2, 3, 4 serotypes.</text>
</comment>
<comment type="domain">
    <text evidence="6">The transmembrane domains of the small envelope protein M and envelope protein E contain an endoplasmic reticulum retention signal.</text>
</comment>
<comment type="PTM">
    <molecule>Genome polyprotein</molecule>
    <text evidence="6">Specific enzymatic cleavages in vivo yield mature proteins. Cleavages in the lumen of endoplasmic reticulum are performed by host signal peptidase, whereas cleavages in the cytoplasmic side are performed by serine protease NS3. Signal cleavage at the 2K-4B site requires a prior NS3 protease-mediated cleavage at the 4A-2K site.</text>
</comment>
<comment type="PTM">
    <molecule>Protein prM</molecule>
    <text evidence="6">Cleaved in post-Golgi vesicles by a host furin, releasing the mature small envelope protein M, and peptide pr. This cleavage is incomplete as up to 30% of viral particles still carry uncleaved prM.</text>
</comment>
<comment type="PTM">
    <molecule>Envelope protein E</molecule>
    <text evidence="6">N-glycosylated.</text>
</comment>
<comment type="PTM">
    <molecule>Non-structural protein 1</molecule>
    <text evidence="6">N-glycosylated. The excreted form is glycosylated and this is required for efficient secretion of the protein from infected cells.</text>
</comment>
<comment type="PTM">
    <molecule>Serine protease NS3</molecule>
    <text evidence="9">Acetylated by host KAT5. Acetylation modulates NS3 RNA-binding and unwinding activities and plays an important positive role for viral replication.</text>
</comment>
<comment type="PTM">
    <molecule>RNA-directed RNA polymerase NS5</molecule>
    <text evidence="7">Sumoylation of RNA-directed RNA polymerase NS5 increases NS5 protein stability allowing proper viral RNA replication.</text>
</comment>
<comment type="PTM">
    <molecule>RNA-directed RNA polymerase NS5</molecule>
    <text evidence="6">Phosphorylated on serines residues. This phosphorylation may trigger NS5 nuclear localization.</text>
</comment>
<comment type="similarity">
    <text evidence="18">In the N-terminal section; belongs to the class I-like SAM-binding methyltransferase superfamily. mRNA cap 0-1 NS5-type methyltransferase family.</text>
</comment>
<name>POLG_DEN4P</name>
<feature type="chain" id="PRO_0000405227" description="Genome polyprotein">
    <location>
        <begin position="1"/>
        <end position="3387"/>
    </location>
</feature>
<feature type="chain" id="PRO_0000268103" description="Capsid protein C" evidence="7">
    <location>
        <begin position="1"/>
        <end position="99"/>
    </location>
</feature>
<feature type="propeptide" id="PRO_0000268104" description="ER anchor for the capsid protein C, removed in mature form by serine protease NS3" evidence="7">
    <location>
        <begin position="100"/>
        <end position="113"/>
    </location>
</feature>
<feature type="chain" id="PRO_0000268105" description="Protein prM" evidence="7">
    <location>
        <begin position="114"/>
        <end position="279"/>
    </location>
</feature>
<feature type="chain" id="PRO_0000268106" description="Peptide pr" evidence="7">
    <location>
        <begin position="114"/>
        <end position="204"/>
    </location>
</feature>
<feature type="chain" id="PRO_0000268107" description="Small envelope protein M" evidence="7">
    <location>
        <begin position="205"/>
        <end position="279"/>
    </location>
</feature>
<feature type="chain" id="PRO_0000268108" description="Envelope protein E" evidence="7">
    <location>
        <begin position="280"/>
        <end position="774"/>
    </location>
</feature>
<feature type="chain" id="PRO_0000268109" description="Non-structural protein 1" evidence="7">
    <location>
        <begin position="775"/>
        <end position="1126"/>
    </location>
</feature>
<feature type="chain" id="PRO_0000268110" description="Non-structural protein 2A" evidence="7">
    <location>
        <begin position="1127"/>
        <end position="1344"/>
    </location>
</feature>
<feature type="chain" id="PRO_0000268111" description="Serine protease subunit NS2B" evidence="7">
    <location>
        <begin position="1345"/>
        <end position="1474"/>
    </location>
</feature>
<feature type="chain" id="PRO_0000268112" description="Serine protease NS3" evidence="7">
    <location>
        <begin position="1475"/>
        <end position="2092"/>
    </location>
</feature>
<feature type="chain" id="PRO_0000268113" description="Non-structural protein 4A" evidence="7">
    <location>
        <begin position="2093"/>
        <end position="2219"/>
    </location>
</feature>
<feature type="peptide" id="PRO_0000268114" description="Peptide 2k" evidence="7">
    <location>
        <begin position="2220"/>
        <end position="2242"/>
    </location>
</feature>
<feature type="chain" id="PRO_0000268115" description="Non-structural protein 4B" evidence="7">
    <location>
        <begin position="2243"/>
        <end position="2487"/>
    </location>
</feature>
<feature type="chain" id="PRO_0000268116" description="RNA-directed RNA polymerase NS5" evidence="7">
    <location>
        <begin position="2488"/>
        <end position="3387"/>
    </location>
</feature>
<feature type="topological domain" description="Cytoplasmic" evidence="12">
    <location>
        <begin position="1"/>
        <end position="100"/>
    </location>
</feature>
<feature type="transmembrane region" description="Helical" evidence="12">
    <location>
        <begin position="101"/>
        <end position="117"/>
    </location>
</feature>
<feature type="topological domain" description="Extracellular" evidence="12">
    <location>
        <begin position="118"/>
        <end position="237"/>
    </location>
</feature>
<feature type="transmembrane region" description="Helical" evidence="12">
    <location>
        <begin position="238"/>
        <end position="258"/>
    </location>
</feature>
<feature type="topological domain" description="Cytoplasmic" evidence="12">
    <location>
        <begin position="259"/>
        <end position="265"/>
    </location>
</feature>
<feature type="transmembrane region" description="Helical" evidence="12">
    <location>
        <begin position="266"/>
        <end position="279"/>
    </location>
</feature>
<feature type="topological domain" description="Extracellular" evidence="12">
    <location>
        <begin position="280"/>
        <end position="723"/>
    </location>
</feature>
<feature type="transmembrane region" description="Helical" evidence="12">
    <location>
        <begin position="724"/>
        <end position="746"/>
    </location>
</feature>
<feature type="topological domain" description="Cytoplasmic" evidence="12">
    <location>
        <begin position="747"/>
        <end position="750"/>
    </location>
</feature>
<feature type="transmembrane region" description="Helical" evidence="12">
    <location>
        <begin position="751"/>
        <end position="771"/>
    </location>
</feature>
<feature type="topological domain" description="Extracellular" evidence="12">
    <location>
        <begin position="772"/>
        <end position="1194"/>
    </location>
</feature>
<feature type="transmembrane region" description="Helical" evidence="12">
    <location>
        <begin position="1195"/>
        <end position="1218"/>
    </location>
</feature>
<feature type="topological domain" description="Lumenal" evidence="12">
    <location>
        <begin position="1219"/>
        <end position="1224"/>
    </location>
</feature>
<feature type="transmembrane region" description="Helical" evidence="12">
    <location>
        <begin position="1225"/>
        <end position="1243"/>
    </location>
</feature>
<feature type="topological domain" description="Cytoplasmic" evidence="12">
    <location>
        <begin position="1244"/>
        <end position="1267"/>
    </location>
</feature>
<feature type="transmembrane region" description="Helical" evidence="12">
    <location>
        <begin position="1268"/>
        <end position="1288"/>
    </location>
</feature>
<feature type="topological domain" description="Lumenal" evidence="12">
    <location>
        <position position="1289"/>
    </location>
</feature>
<feature type="transmembrane region" description="Helical" evidence="12">
    <location>
        <begin position="1290"/>
        <end position="1308"/>
    </location>
</feature>
<feature type="topological domain" description="Lumenal" evidence="12">
    <location>
        <begin position="1309"/>
        <end position="1316"/>
    </location>
</feature>
<feature type="transmembrane region" description="Helical" evidence="12">
    <location>
        <begin position="1317"/>
        <end position="1337"/>
    </location>
</feature>
<feature type="topological domain" description="Cytoplasmic" evidence="12">
    <location>
        <begin position="1338"/>
        <end position="1345"/>
    </location>
</feature>
<feature type="transmembrane region" description="Helical" evidence="12">
    <location>
        <begin position="1346"/>
        <end position="1366"/>
    </location>
</feature>
<feature type="topological domain" description="Lumenal" evidence="12">
    <location>
        <begin position="1367"/>
        <end position="1369"/>
    </location>
</feature>
<feature type="transmembrane region" description="Helical" evidence="12">
    <location>
        <begin position="1370"/>
        <end position="1390"/>
    </location>
</feature>
<feature type="topological domain" description="Cytoplasmic" evidence="12">
    <location>
        <begin position="1391"/>
        <end position="1437"/>
    </location>
</feature>
<feature type="intramembrane region" description="Helical" evidence="12">
    <location>
        <begin position="1438"/>
        <end position="1458"/>
    </location>
</feature>
<feature type="topological domain" description="Cytoplasmic" evidence="12">
    <location>
        <begin position="1459"/>
        <end position="2146"/>
    </location>
</feature>
<feature type="transmembrane region" description="Helical" evidence="12">
    <location>
        <begin position="2147"/>
        <end position="2167"/>
    </location>
</feature>
<feature type="topological domain" description="Lumenal" evidence="12">
    <location>
        <begin position="2168"/>
        <end position="2169"/>
    </location>
</feature>
<feature type="intramembrane region" description="Helical" evidence="12">
    <location>
        <begin position="2170"/>
        <end position="2190"/>
    </location>
</feature>
<feature type="topological domain" description="Lumenal" evidence="12">
    <location>
        <position position="2191"/>
    </location>
</feature>
<feature type="transmembrane region" description="Helical" evidence="12">
    <location>
        <begin position="2192"/>
        <end position="2212"/>
    </location>
</feature>
<feature type="topological domain" description="Cytoplasmic" evidence="12">
    <location>
        <begin position="2213"/>
        <end position="2225"/>
    </location>
</feature>
<feature type="transmembrane region" description="Helical; Note=Signal for NS4B" evidence="12">
    <location>
        <begin position="2226"/>
        <end position="2246"/>
    </location>
</feature>
<feature type="topological domain" description="Lumenal" evidence="12">
    <location>
        <begin position="2247"/>
        <end position="2270"/>
    </location>
</feature>
<feature type="intramembrane region" description="Helical" evidence="12">
    <location>
        <begin position="2271"/>
        <end position="2291"/>
    </location>
</feature>
<feature type="topological domain" description="Lumenal" evidence="12">
    <location>
        <begin position="2292"/>
        <end position="2301"/>
    </location>
</feature>
<feature type="intramembrane region" description="Helical" evidence="12">
    <location>
        <begin position="2302"/>
        <end position="2322"/>
    </location>
</feature>
<feature type="topological domain" description="Lumenal" evidence="12">
    <location>
        <begin position="2323"/>
        <end position="2343"/>
    </location>
</feature>
<feature type="transmembrane region" description="Helical" evidence="12">
    <location>
        <begin position="2344"/>
        <end position="2364"/>
    </location>
</feature>
<feature type="topological domain" description="Cytoplasmic" evidence="12">
    <location>
        <begin position="2365"/>
        <end position="2409"/>
    </location>
</feature>
<feature type="transmembrane region" description="Helical" evidence="12">
    <location>
        <begin position="2410"/>
        <end position="2430"/>
    </location>
</feature>
<feature type="topological domain" description="Lumenal" evidence="12">
    <location>
        <begin position="2431"/>
        <end position="2455"/>
    </location>
</feature>
<feature type="transmembrane region" description="Helical" evidence="12">
    <location>
        <begin position="2456"/>
        <end position="2476"/>
    </location>
</feature>
<feature type="topological domain" description="Cytoplasmic" evidence="12">
    <location>
        <begin position="2477"/>
        <end position="3387"/>
    </location>
</feature>
<feature type="domain" description="Peptidase S7" evidence="17">
    <location>
        <begin position="1475"/>
        <end position="1652"/>
    </location>
</feature>
<feature type="domain" description="Helicase ATP-binding" evidence="15">
    <location>
        <begin position="1654"/>
        <end position="1810"/>
    </location>
</feature>
<feature type="domain" description="Helicase C-terminal">
    <location>
        <begin position="1820"/>
        <end position="1987"/>
    </location>
</feature>
<feature type="domain" description="mRNA cap 0-1 NS5-type MT" evidence="18">
    <location>
        <begin position="2489"/>
        <end position="2751"/>
    </location>
</feature>
<feature type="domain" description="RdRp catalytic" evidence="14">
    <location>
        <begin position="3016"/>
        <end position="3166"/>
    </location>
</feature>
<feature type="region of interest" description="Hydrophobic; homodimerization of capsid protein C" evidence="7">
    <location>
        <begin position="36"/>
        <end position="71"/>
    </location>
</feature>
<feature type="region of interest" description="Fusion peptide" evidence="4">
    <location>
        <begin position="377"/>
        <end position="390"/>
    </location>
</feature>
<feature type="region of interest" description="Interacts with and activates NS3 protease" evidence="16">
    <location>
        <begin position="1397"/>
        <end position="1436"/>
    </location>
</feature>
<feature type="region of interest" description="Important for RNA-binding" evidence="5">
    <location>
        <begin position="1658"/>
        <end position="1661"/>
    </location>
</feature>
<feature type="short sequence motif" description="DEAH box" evidence="15">
    <location>
        <begin position="1758"/>
        <end position="1761"/>
    </location>
</feature>
<feature type="short sequence motif" description="SUMO-interacting motif" evidence="7">
    <location>
        <begin position="2564"/>
        <end position="2567"/>
    </location>
</feature>
<feature type="active site" description="Charge relay system; for serine protease NS3 activity" evidence="17">
    <location>
        <position position="1525"/>
    </location>
</feature>
<feature type="active site" description="Charge relay system; for serine protease NS3 activity" evidence="17">
    <location>
        <position position="1549"/>
    </location>
</feature>
<feature type="active site" description="Charge relay system; for serine protease NS3 activity" evidence="17">
    <location>
        <position position="1609"/>
    </location>
</feature>
<feature type="active site" description="For 2'-O-MTase activity" evidence="10">
    <location>
        <position position="2548"/>
    </location>
</feature>
<feature type="active site" description="For 2'-O-MTase activity" evidence="10">
    <location>
        <position position="2633"/>
    </location>
</feature>
<feature type="active site" description="For 2'-O-MTase activity" evidence="10">
    <location>
        <position position="2668"/>
    </location>
</feature>
<feature type="active site" description="For 2'-O-MTase activity" evidence="10">
    <location>
        <position position="2704"/>
    </location>
</feature>
<feature type="binding site" evidence="15">
    <location>
        <begin position="1667"/>
        <end position="1674"/>
    </location>
    <ligand>
        <name>ATP</name>
        <dbReference type="ChEBI" id="CHEBI:30616"/>
    </ligand>
</feature>
<feature type="binding site" evidence="18">
    <location>
        <position position="2543"/>
    </location>
    <ligand>
        <name>S-adenosyl-L-methionine</name>
        <dbReference type="ChEBI" id="CHEBI:59789"/>
    </ligand>
</feature>
<feature type="binding site" evidence="18">
    <location>
        <position position="2573"/>
    </location>
    <ligand>
        <name>S-adenosyl-L-methionine</name>
        <dbReference type="ChEBI" id="CHEBI:59789"/>
    </ligand>
</feature>
<feature type="binding site" evidence="18">
    <location>
        <position position="2574"/>
    </location>
    <ligand>
        <name>S-adenosyl-L-methionine</name>
        <dbReference type="ChEBI" id="CHEBI:59789"/>
    </ligand>
</feature>
<feature type="binding site" evidence="18">
    <location>
        <position position="2591"/>
    </location>
    <ligand>
        <name>S-adenosyl-L-methionine</name>
        <dbReference type="ChEBI" id="CHEBI:59789"/>
    </ligand>
</feature>
<feature type="binding site" evidence="18">
    <location>
        <position position="2592"/>
    </location>
    <ligand>
        <name>S-adenosyl-L-methionine</name>
        <dbReference type="ChEBI" id="CHEBI:59789"/>
    </ligand>
</feature>
<feature type="binding site" evidence="18">
    <location>
        <position position="2618"/>
    </location>
    <ligand>
        <name>S-adenosyl-L-methionine</name>
        <dbReference type="ChEBI" id="CHEBI:59789"/>
    </ligand>
</feature>
<feature type="binding site" evidence="18">
    <location>
        <position position="2619"/>
    </location>
    <ligand>
        <name>S-adenosyl-L-methionine</name>
        <dbReference type="ChEBI" id="CHEBI:59789"/>
    </ligand>
</feature>
<feature type="binding site" evidence="18">
    <location>
        <position position="2634"/>
    </location>
    <ligand>
        <name>S-adenosyl-L-methionine</name>
        <dbReference type="ChEBI" id="CHEBI:59789"/>
    </ligand>
</feature>
<feature type="binding site" evidence="18">
    <location>
        <position position="2706"/>
    </location>
    <ligand>
        <name>S-adenosyl-L-methionine</name>
        <dbReference type="ChEBI" id="CHEBI:59789"/>
    </ligand>
</feature>
<feature type="binding site" evidence="10">
    <location>
        <position position="2925"/>
    </location>
    <ligand>
        <name>Zn(2+)</name>
        <dbReference type="ChEBI" id="CHEBI:29105"/>
        <label>1</label>
    </ligand>
</feature>
<feature type="binding site" evidence="10">
    <location>
        <position position="2929"/>
    </location>
    <ligand>
        <name>Zn(2+)</name>
        <dbReference type="ChEBI" id="CHEBI:29105"/>
        <label>1</label>
    </ligand>
</feature>
<feature type="binding site" evidence="10">
    <location>
        <position position="2934"/>
    </location>
    <ligand>
        <name>Zn(2+)</name>
        <dbReference type="ChEBI" id="CHEBI:29105"/>
        <label>1</label>
    </ligand>
</feature>
<feature type="binding site" evidence="10">
    <location>
        <position position="2937"/>
    </location>
    <ligand>
        <name>Zn(2+)</name>
        <dbReference type="ChEBI" id="CHEBI:29105"/>
        <label>1</label>
    </ligand>
</feature>
<feature type="binding site" evidence="10">
    <location>
        <position position="3200"/>
    </location>
    <ligand>
        <name>Zn(2+)</name>
        <dbReference type="ChEBI" id="CHEBI:29105"/>
        <label>2</label>
    </ligand>
</feature>
<feature type="binding site" evidence="10">
    <location>
        <position position="3216"/>
    </location>
    <ligand>
        <name>Zn(2+)</name>
        <dbReference type="ChEBI" id="CHEBI:29105"/>
        <label>2</label>
    </ligand>
</feature>
<feature type="binding site" evidence="10">
    <location>
        <position position="3335"/>
    </location>
    <ligand>
        <name>Zn(2+)</name>
        <dbReference type="ChEBI" id="CHEBI:29105"/>
        <label>2</label>
    </ligand>
</feature>
<feature type="site" description="Cleavage; by viral protease NS3" evidence="7">
    <location>
        <begin position="99"/>
        <end position="100"/>
    </location>
</feature>
<feature type="site" description="Cleavage; by host signal peptidase" evidence="7">
    <location>
        <begin position="113"/>
        <end position="114"/>
    </location>
</feature>
<feature type="site" description="Cleavage; by host furin" evidence="7 12">
    <location>
        <begin position="204"/>
        <end position="205"/>
    </location>
</feature>
<feature type="site" description="Cleavage; by host signal peptidase" evidence="7">
    <location>
        <begin position="279"/>
        <end position="280"/>
    </location>
</feature>
<feature type="site" description="Cleavage; by host signal peptidase" evidence="7">
    <location>
        <begin position="774"/>
        <end position="775"/>
    </location>
</feature>
<feature type="site" description="Cleavage; by host" evidence="7">
    <location>
        <begin position="1126"/>
        <end position="1127"/>
    </location>
</feature>
<feature type="site" description="Cleavage; by viral protease NS3" evidence="7">
    <location>
        <begin position="1344"/>
        <end position="1345"/>
    </location>
</feature>
<feature type="site" description="Cleavage; by autolysis" evidence="7">
    <location>
        <begin position="1474"/>
        <end position="1475"/>
    </location>
</feature>
<feature type="site" description="Involved in NS3 ATPase and RTPase activities" evidence="3">
    <location>
        <position position="1931"/>
    </location>
</feature>
<feature type="site" description="Involved in NS3 ATPase and RTPase activities" evidence="3">
    <location>
        <position position="1934"/>
    </location>
</feature>
<feature type="site" description="Cleavage; by autolysis" evidence="7">
    <location>
        <begin position="2092"/>
        <end position="2093"/>
    </location>
</feature>
<feature type="site" description="Cleavage; by viral protease NS3" evidence="7">
    <location>
        <begin position="2219"/>
        <end position="2220"/>
    </location>
</feature>
<feature type="site" description="Cleavage; by host signal peptidase" evidence="7">
    <location>
        <begin position="2242"/>
        <end position="2243"/>
    </location>
</feature>
<feature type="site" description="Cleavage; by viral protease NS3" evidence="7">
    <location>
        <begin position="2487"/>
        <end position="2488"/>
    </location>
</feature>
<feature type="site" description="mRNA cap binding" evidence="18">
    <location>
        <position position="2501"/>
    </location>
</feature>
<feature type="site" description="mRNA cap binding; via carbonyl oxygen" evidence="18">
    <location>
        <position position="2504"/>
    </location>
</feature>
<feature type="site" description="mRNA cap binding" evidence="18">
    <location>
        <position position="2505"/>
    </location>
</feature>
<feature type="site" description="mRNA cap binding; via carbonyl oxygen" evidence="18">
    <location>
        <position position="2507"/>
    </location>
</feature>
<feature type="site" description="mRNA cap binding" evidence="18">
    <location>
        <position position="2512"/>
    </location>
</feature>
<feature type="site" description="mRNA cap binding" evidence="18">
    <location>
        <position position="2516"/>
    </location>
</feature>
<feature type="site" description="Essential for 2'-O-methyltransferase activity" evidence="18">
    <location>
        <position position="2548"/>
    </location>
</feature>
<feature type="site" description="Essential for 2'-O-methyltransferase and N-7 methyltransferase activity" evidence="18">
    <location>
        <position position="2633"/>
    </location>
</feature>
<feature type="site" description="mRNA cap binding" evidence="18">
    <location>
        <position position="2637"/>
    </location>
</feature>
<feature type="site" description="Essential for 2'-O-methyltransferase activity" evidence="18">
    <location>
        <position position="2668"/>
    </location>
</feature>
<feature type="site" description="mRNA cap binding" evidence="18">
    <location>
        <position position="2699"/>
    </location>
</feature>
<feature type="site" description="mRNA cap binding" evidence="18">
    <location>
        <position position="2701"/>
    </location>
</feature>
<feature type="site" description="Essential for 2'-O-methyltransferase activity" evidence="18">
    <location>
        <position position="2704"/>
    </location>
</feature>
<feature type="modified residue" description="N6-acetyllysine; by host" evidence="9">
    <location>
        <position position="1862"/>
    </location>
</feature>
<feature type="modified residue" description="Phosphoserine" evidence="1">
    <location>
        <position position="2543"/>
    </location>
</feature>
<feature type="glycosylation site" description="N-linked (GlcNAc...) asparagine; by host" evidence="13">
    <location>
        <position position="182"/>
    </location>
</feature>
<feature type="glycosylation site" description="N-linked (GlcNAc...) asparagine; by host" evidence="13">
    <location>
        <position position="346"/>
    </location>
</feature>
<feature type="glycosylation site" description="N-linked (GlcNAc...) asparagine; by host" evidence="13">
    <location>
        <position position="904"/>
    </location>
</feature>
<feature type="glycosylation site" description="N-linked (GlcNAc...) asparagine; by host" evidence="13">
    <location>
        <position position="981"/>
    </location>
</feature>
<feature type="glycosylation site" description="N-linked (GlcNAc...) asparagine; by host" evidence="13">
    <location>
        <position position="2297"/>
    </location>
</feature>
<feature type="glycosylation site" description="N-linked (GlcNAc...) asparagine; by host" evidence="13">
    <location>
        <position position="2301"/>
    </location>
</feature>
<feature type="glycosylation site" description="N-linked (GlcNAc...) asparagine; by host" evidence="13">
    <location>
        <position position="2453"/>
    </location>
</feature>
<feature type="disulfide bond" evidence="6">
    <location>
        <begin position="282"/>
        <end position="309"/>
    </location>
</feature>
<feature type="disulfide bond" evidence="6">
    <location>
        <begin position="339"/>
        <end position="400"/>
    </location>
</feature>
<feature type="disulfide bond" evidence="6">
    <location>
        <begin position="353"/>
        <end position="384"/>
    </location>
</feature>
<feature type="disulfide bond" evidence="6">
    <location>
        <begin position="371"/>
        <end position="395"/>
    </location>
</feature>
<feature type="disulfide bond" evidence="6">
    <location>
        <begin position="464"/>
        <end position="564"/>
    </location>
</feature>
<feature type="disulfide bond" evidence="6">
    <location>
        <begin position="581"/>
        <end position="612"/>
    </location>
</feature>
<feature type="disulfide bond" evidence="6">
    <location>
        <begin position="778"/>
        <end position="789"/>
    </location>
</feature>
<feature type="disulfide bond" evidence="6">
    <location>
        <begin position="829"/>
        <end position="917"/>
    </location>
</feature>
<feature type="disulfide bond" evidence="6">
    <location>
        <begin position="953"/>
        <end position="997"/>
    </location>
</feature>
<feature type="disulfide bond" evidence="6">
    <location>
        <begin position="1054"/>
        <end position="1103"/>
    </location>
</feature>
<feature type="disulfide bond" evidence="6">
    <location>
        <begin position="1065"/>
        <end position="1087"/>
    </location>
</feature>
<feature type="disulfide bond" evidence="6">
    <location>
        <begin position="1086"/>
        <end position="1090"/>
    </location>
</feature>
<feature type="strand" evidence="19">
    <location>
        <begin position="585"/>
        <end position="593"/>
    </location>
</feature>
<feature type="strand" evidence="19">
    <location>
        <begin position="599"/>
        <end position="605"/>
    </location>
</feature>
<feature type="strand" evidence="19">
    <location>
        <begin position="607"/>
        <end position="609"/>
    </location>
</feature>
<feature type="strand" evidence="19">
    <location>
        <begin position="611"/>
        <end position="613"/>
    </location>
</feature>
<feature type="strand" evidence="19">
    <location>
        <begin position="616"/>
        <end position="620"/>
    </location>
</feature>
<feature type="strand" evidence="19">
    <location>
        <begin position="632"/>
        <end position="634"/>
    </location>
</feature>
<feature type="strand" evidence="19">
    <location>
        <begin position="643"/>
        <end position="648"/>
    </location>
</feature>
<feature type="strand" evidence="19">
    <location>
        <begin position="652"/>
        <end position="661"/>
    </location>
</feature>
<feature type="helix" evidence="19">
    <location>
        <begin position="662"/>
        <end position="664"/>
    </location>
</feature>
<feature type="strand" evidence="19">
    <location>
        <begin position="666"/>
        <end position="672"/>
    </location>
</feature>
<feature type="strand" evidence="21">
    <location>
        <begin position="776"/>
        <end position="779"/>
    </location>
</feature>
<feature type="strand" evidence="21">
    <location>
        <begin position="782"/>
        <end position="784"/>
    </location>
</feature>
<feature type="strand" evidence="21">
    <location>
        <begin position="788"/>
        <end position="790"/>
    </location>
</feature>
<feature type="strand" evidence="21">
    <location>
        <begin position="792"/>
        <end position="796"/>
    </location>
</feature>
<feature type="turn" evidence="21">
    <location>
        <begin position="799"/>
        <end position="801"/>
    </location>
</feature>
<feature type="strand" evidence="21">
    <location>
        <begin position="806"/>
        <end position="809"/>
    </location>
</feature>
<feature type="helix" evidence="21">
    <location>
        <begin position="815"/>
        <end position="826"/>
    </location>
</feature>
<feature type="helix" evidence="21">
    <location>
        <begin position="836"/>
        <end position="844"/>
    </location>
</feature>
<feature type="helix" evidence="21">
    <location>
        <begin position="846"/>
        <end position="855"/>
    </location>
</feature>
<feature type="strand" evidence="21">
    <location>
        <begin position="861"/>
        <end position="864"/>
    </location>
</feature>
<feature type="strand" evidence="22">
    <location>
        <begin position="890"/>
        <end position="895"/>
    </location>
</feature>
<feature type="strand" evidence="21">
    <location>
        <begin position="906"/>
        <end position="910"/>
    </location>
</feature>
<feature type="strand" evidence="21">
    <location>
        <begin position="915"/>
        <end position="917"/>
    </location>
</feature>
<feature type="helix" evidence="21">
    <location>
        <begin position="919"/>
        <end position="921"/>
    </location>
</feature>
<feature type="strand" evidence="21">
    <location>
        <begin position="927"/>
        <end position="932"/>
    </location>
</feature>
<feature type="strand" evidence="21">
    <location>
        <begin position="936"/>
        <end position="945"/>
    </location>
</feature>
<feature type="helix" evidence="21">
    <location>
        <begin position="955"/>
        <end position="957"/>
    </location>
</feature>
<feature type="strand" evidence="21">
    <location>
        <begin position="959"/>
        <end position="963"/>
    </location>
</feature>
<feature type="strand" evidence="21">
    <location>
        <begin position="966"/>
        <end position="970"/>
    </location>
</feature>
<feature type="strand" evidence="21">
    <location>
        <begin position="975"/>
        <end position="994"/>
    </location>
</feature>
<feature type="helix" evidence="21">
    <location>
        <begin position="1001"/>
        <end position="1003"/>
    </location>
</feature>
<feature type="helix" evidence="21">
    <location>
        <begin position="1012"/>
        <end position="1014"/>
    </location>
</feature>
<feature type="helix" evidence="21">
    <location>
        <begin position="1019"/>
        <end position="1021"/>
    </location>
</feature>
<feature type="strand" evidence="21">
    <location>
        <begin position="1025"/>
        <end position="1029"/>
    </location>
</feature>
<feature type="helix" evidence="21">
    <location>
        <begin position="1042"/>
        <end position="1044"/>
    </location>
</feature>
<feature type="strand" evidence="21">
    <location>
        <begin position="1045"/>
        <end position="1052"/>
    </location>
</feature>
<feature type="strand" evidence="21">
    <location>
        <begin position="1058"/>
        <end position="1061"/>
    </location>
</feature>
<feature type="strand" evidence="21">
    <location>
        <begin position="1072"/>
        <end position="1075"/>
    </location>
</feature>
<feature type="strand" evidence="23">
    <location>
        <begin position="1077"/>
        <end position="1079"/>
    </location>
</feature>
<feature type="strand" evidence="21">
    <location>
        <begin position="1084"/>
        <end position="1089"/>
    </location>
</feature>
<feature type="strand" evidence="21">
    <location>
        <begin position="1095"/>
        <end position="1098"/>
    </location>
</feature>
<feature type="strand" evidence="21">
    <location>
        <begin position="1103"/>
        <end position="1105"/>
    </location>
</feature>
<feature type="strand" evidence="21">
    <location>
        <begin position="1109"/>
        <end position="1114"/>
    </location>
</feature>
<feature type="helix" evidence="21">
    <location>
        <begin position="1116"/>
        <end position="1118"/>
    </location>
</feature>
<feature type="strand" evidence="20">
    <location>
        <begin position="1395"/>
        <end position="1401"/>
    </location>
</feature>
<feature type="strand" evidence="20">
    <location>
        <begin position="1418"/>
        <end position="1433"/>
    </location>
</feature>
<feature type="strand" evidence="20">
    <location>
        <begin position="1435"/>
        <end position="1437"/>
    </location>
</feature>
<organismHost>
    <name type="scientific">Aedes aegypti</name>
    <name type="common">Yellowfever mosquito</name>
    <name type="synonym">Culex aegypti</name>
    <dbReference type="NCBI Taxonomy" id="7159"/>
</organismHost>
<organismHost>
    <name type="scientific">Aedes albopictus</name>
    <name type="common">Asian tiger mosquito</name>
    <name type="synonym">Stegomyia albopicta</name>
    <dbReference type="NCBI Taxonomy" id="7160"/>
</organismHost>
<organismHost>
    <name type="scientific">Aedes polynesiensis</name>
    <name type="common">Polynesian tiger mosquito</name>
    <dbReference type="NCBI Taxonomy" id="188700"/>
</organismHost>
<organismHost>
    <name type="scientific">Homo sapiens</name>
    <name type="common">Human</name>
    <dbReference type="NCBI Taxonomy" id="9606"/>
</organismHost>
<protein>
    <recommendedName>
        <fullName>Genome polyprotein</fullName>
    </recommendedName>
    <component>
        <recommendedName>
            <fullName>Capsid protein C</fullName>
        </recommendedName>
        <alternativeName>
            <fullName>Core protein</fullName>
        </alternativeName>
    </component>
    <component>
        <recommendedName>
            <fullName>Protein prM</fullName>
        </recommendedName>
    </component>
    <component>
        <recommendedName>
            <fullName>Peptide pr</fullName>
        </recommendedName>
    </component>
    <component>
        <recommendedName>
            <fullName>Small envelope protein M</fullName>
        </recommendedName>
        <alternativeName>
            <fullName>Matrix protein</fullName>
        </alternativeName>
    </component>
    <component>
        <recommendedName>
            <fullName>Envelope protein E</fullName>
        </recommendedName>
    </component>
    <component>
        <recommendedName>
            <fullName>Non-structural protein 1</fullName>
            <shortName>NS1</shortName>
        </recommendedName>
    </component>
    <component>
        <recommendedName>
            <fullName>Non-structural protein 2A</fullName>
            <shortName>NS2A</shortName>
        </recommendedName>
    </component>
    <component>
        <recommendedName>
            <fullName>Serine protease subunit NS2B</fullName>
        </recommendedName>
        <alternativeName>
            <fullName>Flavivirin protease NS2B regulatory subunit</fullName>
        </alternativeName>
        <alternativeName>
            <fullName>Non-structural protein 2B</fullName>
        </alternativeName>
    </component>
    <component>
        <recommendedName>
            <fullName>Serine protease NS3</fullName>
            <ecNumber>3.4.21.91</ecNumber>
            <ecNumber evidence="11">3.6.1.15</ecNumber>
            <ecNumber evidence="11">3.6.4.13</ecNumber>
        </recommendedName>
        <alternativeName>
            <fullName>Flavivirin protease NS3 catalytic subunit</fullName>
        </alternativeName>
        <alternativeName>
            <fullName>Non-structural protein 3</fullName>
        </alternativeName>
    </component>
    <component>
        <recommendedName>
            <fullName>Non-structural protein 4A</fullName>
            <shortName>NS4A</shortName>
        </recommendedName>
    </component>
    <component>
        <recommendedName>
            <fullName>Peptide 2k</fullName>
        </recommendedName>
    </component>
    <component>
        <recommendedName>
            <fullName>Non-structural protein 4B</fullName>
            <shortName>NS4B</shortName>
        </recommendedName>
    </component>
    <component>
        <recommendedName>
            <fullName>RNA-directed RNA polymerase NS5</fullName>
            <ecNumber evidence="18">2.1.1.56</ecNumber>
            <ecNumber evidence="18">2.1.1.57</ecNumber>
            <ecNumber evidence="14">2.7.7.48</ecNumber>
        </recommendedName>
        <alternativeName>
            <fullName>Non-structural protein 5</fullName>
        </alternativeName>
    </component>
</protein>
<keyword id="KW-0002">3D-structure</keyword>
<keyword id="KW-0007">Acetylation</keyword>
<keyword id="KW-1072">Activation of host autophagy by virus</keyword>
<keyword id="KW-0067">ATP-binding</keyword>
<keyword id="KW-0167">Capsid protein</keyword>
<keyword id="KW-1165">Clathrin-mediated endocytosis of virus by host</keyword>
<keyword id="KW-0165">Cleavage on pair of basic residues</keyword>
<keyword id="KW-1015">Disulfide bond</keyword>
<keyword id="KW-1170">Fusion of virus membrane with host endosomal membrane</keyword>
<keyword id="KW-1168">Fusion of virus membrane with host membrane</keyword>
<keyword id="KW-0325">Glycoprotein</keyword>
<keyword id="KW-0347">Helicase</keyword>
<keyword id="KW-1035">Host cytoplasm</keyword>
<keyword id="KW-1038">Host endoplasmic reticulum</keyword>
<keyword id="KW-1043">Host membrane</keyword>
<keyword id="KW-1045">Host mitochondrion</keyword>
<keyword id="KW-1048">Host nucleus</keyword>
<keyword id="KW-0945">Host-virus interaction</keyword>
<keyword id="KW-0378">Hydrolase</keyword>
<keyword id="KW-1090">Inhibition of host innate immune response by virus</keyword>
<keyword id="KW-1114">Inhibition of host interferon signaling pathway by virus</keyword>
<keyword id="KW-1097">Inhibition of host MAVS by virus</keyword>
<keyword id="KW-1113">Inhibition of host RLR pathway by virus</keyword>
<keyword id="KW-1106">Inhibition of host STAT2 by virus</keyword>
<keyword id="KW-1112">Inhibition of host TYK2 by virus</keyword>
<keyword id="KW-0922">Interferon antiviral system evasion</keyword>
<keyword id="KW-0407">Ion channel</keyword>
<keyword id="KW-0406">Ion transport</keyword>
<keyword id="KW-0472">Membrane</keyword>
<keyword id="KW-0479">Metal-binding</keyword>
<keyword id="KW-0489">Methyltransferase</keyword>
<keyword id="KW-0506">mRNA capping</keyword>
<keyword id="KW-0507">mRNA processing</keyword>
<keyword id="KW-0511">Multifunctional enzyme</keyword>
<keyword id="KW-0547">Nucleotide-binding</keyword>
<keyword id="KW-0548">Nucleotidyltransferase</keyword>
<keyword id="KW-0597">Phosphoprotein</keyword>
<keyword id="KW-0645">Protease</keyword>
<keyword id="KW-0694">RNA-binding</keyword>
<keyword id="KW-0696">RNA-directed RNA polymerase</keyword>
<keyword id="KW-0949">S-adenosyl-L-methionine</keyword>
<keyword id="KW-0964">Secreted</keyword>
<keyword id="KW-0720">Serine protease</keyword>
<keyword id="KW-0941">Suppressor of RNA silencing</keyword>
<keyword id="KW-0804">Transcription</keyword>
<keyword id="KW-0805">Transcription regulation</keyword>
<keyword id="KW-0808">Transferase</keyword>
<keyword id="KW-0812">Transmembrane</keyword>
<keyword id="KW-1133">Transmembrane helix</keyword>
<keyword id="KW-0813">Transport</keyword>
<keyword id="KW-0832">Ubl conjugation</keyword>
<keyword id="KW-1161">Viral attachment to host cell</keyword>
<keyword id="KW-0261">Viral envelope protein</keyword>
<keyword id="KW-0899">Viral immunoevasion</keyword>
<keyword id="KW-1182">Viral ion channel</keyword>
<keyword id="KW-1162">Viral penetration into host cytoplasm</keyword>
<keyword id="KW-0693">Viral RNA replication</keyword>
<keyword id="KW-0946">Virion</keyword>
<keyword id="KW-1164">Virus endocytosis by host</keyword>
<keyword id="KW-1160">Virus entry into host cell</keyword>
<keyword id="KW-0862">Zinc</keyword>
<reference key="1">
    <citation type="submission" date="2005-02" db="EMBL/GenBank/DDBJ databases">
        <authorList>
            <person name="Yip A."/>
            <person name="Schreiber M."/>
            <person name="Liu W."/>
            <person name="Khoo C.A."/>
            <person name="Wong C."/>
            <person name="Hibberd M."/>
            <person name="Vasudevan S."/>
        </authorList>
    </citation>
    <scope>NUCLEOTIDE SEQUENCE [GENOMIC RNA]</scope>
</reference>
<sequence>MNQRKKVVRPPFNMLKRERNRVSTPQGLVKRFSTGLFSGKGPLRMVLAFITFLRVLSIPPTAGILKRWGQLKKNKAIKILTGFRKEIGRMLNILNGRKRSTMTLLCLIPTAMAFHLSTRDGEPLMIVARHERGRPLLFKTTEGINKCTLIAMDLGEMCEDTVTYECPLLVNTEPEDIDCWCNLTSAWVMYGTCTQSGERRREKRSVALTPHSGMGLETRAETWMSSEGAWKHAQRVESWILRNPGFALLAGFMAYMIGQTGIQRTVFFVLMMLVAPSYGMRCVGVGNRDFVEGVSGGAWVDLVLEHGGCVTTMAQGKPTLDFELIKTTAKEVALLRTYCIEASISNITTATRCPTQGEPYLKEEQDQQYICRRDVVDRGWGNGCGLFGKGGVVTCAKFSCSGKITGNLVQIENLEYTVVVTVHNGDTHAVGNDIPNHGVTATITPRSPSVEVKLPDYGELTLDCEPRSGIDFNEMILMKMKKKTWLVHKQWFLDLPLPWAAGADTSEVHWNYKERMVTFKVPHAKRQDVTVLGSQEGAMHSALTGATEVDSGDGNHMFAGHLKCKVRMEKLRIKGMSYTMCSGKFSIDKEMAETQHGTTVVKVKYEGAGAPCKVPIEIRDVNKEKVVGRIISSTPFAEYTNSVTNIELEPPFGDSYIVIGVGDSALTLHWFRKGSSIGKMLESTYRGAKRMAILGETAWDFGSVGGLLTSLGKAVHQVFGSVYTTMFGGVSWMVRILIGFLVLWIGTNSRNTSMAMTCIAVGGITLFLGFTVHADTGCAVSWSGKELKCGSGIFVIDNVHTWTEQYKFQPESPARLASAILNAHEDGVCGIRSTTRLENIMWKQITNELNYVLWEGGHDLTVVAGDVKGVLSKGKRALAPPVNDLKYSWKTWGKAKIFTPEAKNSTFLIDGPDTSECPNERRAWNFLEVEDYGFGMFTTNIWMKFREGSSEVCDHRLMSAAIKDQKAVHADMGYWIESSKNQTWQIEKASLIEVKTCLWPKTHTLWSNGVLESQMLIPKAYAGPFSQHNYRQGYATQTVGPWHLGKLEIDFGECPGTTVTIQEDCDHRGPSLRTTTASGKLVTQWCCRSCTMPPLRFLGEDGCWYGMEIRPLSEKEENMVKSQVSAGQGTSETFSMGLLCLTLFVEECLRRRVTRKHMILVVVTTLCAIILGGLTWMDLLRALIMLGDTMSGRMGGQIHLAIMAVFKMSPGYVLGIFLRKLTSRETALMVIGMAMTTVLSIPHDLMEFIDGISLGLILLKMVTHFDNTQVGTLALSLTFIRSTMPLVMAWRTIMAVLFVVTLIPLCRTSCLQKQSHWVEITALILGAQALPVYLMTLMKGASKRSWPLNEGIMAVGLVSLLGSALLKNDVPLAGPMVAGGLLLAAYVMSGSSADLSLEKAANVQWDEMADITGSSPIIEVKQDEDGSFSIRDIEETNMITLLVKLALITVSGLYPLAIPVTMTLWYMWQVKTQRSGALWDVPSPAAAQKATLTEGVYRIMQRGLFGKTQVGVGIHMEGVFHTMWHVTRGSVICHETGRLEPSWADVRNDMISYGGGWRLGDKWDKEEDVQVLAIEPGKNPKHVQTKPGLFKTLTGEIGAVTLDFKPGTSGSPIINRKGKVIGLYGNGVVTKSGDYVSAITQAERTGEPDYEVDEDIFRKKRLTIMDLHPGAGKTKRILPSIVREALKRRLRTLILAPTRVVAAEMEEALRGLPIRYQTPAVKSEHTGREIVDLMCHATFTTRLLSSTRVPNYNLIVMDEAHFTDPSSVAARGYISTRVEMGEAAAIFMTATPPGATDPFPQSNSPIEDIEREIPERSWNTGFDWITDYQGKTVWFVPSIKAGNDIANCLRKSGKKVIQLSRKTFDTEYPKTKLTDWDFVVTTDISEMGANFRAGRVIDPRRCLKPVISTDGPERVILAGPIPVTPASAAQRRGRIGRNPAQEDDQYVFSGDPLKNDEDHAHWTEAKMLLDNIYTPEGIIPTLFGPEREKNQAIDGEFRLRGEQRKTFVELMRRGDLPVWLSYKVASAGISYKDREWCFTGERNNQILEENMEVEIWTREGEKKKLRPKWLDARVYADPMALKDFKEFASGRKSITLDILTEIASLPTYLSSRAKLALDNIVMLHTTERGGKAYQHALNELPESLETLMLVALLGAMTAGIFLFFMQGKGIGKLSMGLIAIAVASGLLWVAEIQPQWIAASIILEFFLMVLLIPEPEKQRTPQDNQLIYVILTILTIIGLIAANEMGLIEKTKTDFGFYQVKTETTILDVDLRPASAWTLYAVATTILTPMLRHTIENTSANLSLAAIANQAAVLMGLGKGWPLHRMDLGVPLLAMGCYSQVNPTTLIASLVMLLVHYAIIGPGLQAKATREAQKRTAAGIMKNPTVDGITVIDLEPISYDPKFEKQLGQVMLLVLCAGQLLLMRTTWAFCEVLTLATGPVLTLWEGNPGRFWNTTIAVSTANIFRGSYLAGAGLAFSLIKNAQTPRRGTGTTGETLGEKWKRQLNSLDRKEFEEYKRSGILEVDRTEAKSALKDGSKIKHAVSRGSSKIRWIVERGMVKPKGKVVDLGCGRGGWSYYMATLKNVTEVKGYTKGGPGHEEPIPMATYGWNLVKLHSGVDVFYKPTEQVDTLLCDIGESSSNPTIEEGRTLRVLKMVEPWLSSKPEFCIKVLNPYMPTVIEELEKLQRKHGGSLVRCPLSRNSTHEMYWVSGVSGNIVSSVNTTSKMLLNRFTTRHRKPTYEKDVDLGAGTRSVSTETEKPDMTIIGRRLQRLQEEHKETWHYDQENPYRTWAYHGSYEAPSTGSASSMVNGVVKLLTKPWDVIPMVTQLAMTDTTPFGQQRVFKEKVDTRTPQPKPGTRMVMTTTANWLWALLGKKKNPRLCTREEFISKVRSNAAIGAVFQEEQGWTSASEAVNDSRFWELVDKERALHQEGKCESCVYNMMGKREKKLGEFGRAKGSRAIWYMWLGARFLEFEALGFLNEDHWFGRENSWSGVEGEGLHRLGYILEDIDKKDGDLIYADDTAGWDTRITEDDLLNEELITEQMAPHHKILAKAIFKLTYQNKVVKVLRPTPKGAVMDIISRKDQRGSGQVGTYGLNTFTNMEVQLIRQMEAEGVITQDDMHNPKGLKERVEKWLKECGVDRLKRMAISGDDCVVKPLDERFSTSLLFLNDMGKVRKDIPQWEPSKGWKNWQEVPFCSHHFHKIFMKDGRSLVVPCRNQDELIGRARISQGAGWSLRETACLGKAYAQMWSLMYFHRRDLRLASMAICSAVPTEWFPTSRTTWSIHAHHQWMTTEDMLKVWNRVWIEDNPNMTDKTPVHSWEDIPYLGKREDLWCGSLIGLSSRATWAKNIHTAITQVRNLIGKEEYVDYMPVMKRYSAPFESEGVL</sequence>
<organism>
    <name type="scientific">Dengue virus type 4 (strain Philippines/H241/1956)</name>
    <name type="common">DENV-4</name>
    <dbReference type="NCBI Taxonomy" id="408686"/>
    <lineage>
        <taxon>Viruses</taxon>
        <taxon>Riboviria</taxon>
        <taxon>Orthornavirae</taxon>
        <taxon>Kitrinoviricota</taxon>
        <taxon>Flasuviricetes</taxon>
        <taxon>Amarillovirales</taxon>
        <taxon>Flaviviridae</taxon>
        <taxon>Orthoflavivirus</taxon>
        <taxon>Orthoflavivirus denguei</taxon>
        <taxon>Dengue virus</taxon>
    </lineage>
</organism>
<accession>Q58HT7</accession>
<evidence type="ECO:0000250" key="1">
    <source>
        <dbReference type="UniProtKB" id="P03314"/>
    </source>
</evidence>
<evidence type="ECO:0000250" key="2">
    <source>
        <dbReference type="UniProtKB" id="P09866"/>
    </source>
</evidence>
<evidence type="ECO:0000250" key="3">
    <source>
        <dbReference type="UniProtKB" id="P14335"/>
    </source>
</evidence>
<evidence type="ECO:0000250" key="4">
    <source>
        <dbReference type="UniProtKB" id="P14336"/>
    </source>
</evidence>
<evidence type="ECO:0000250" key="5">
    <source>
        <dbReference type="UniProtKB" id="P14340"/>
    </source>
</evidence>
<evidence type="ECO:0000250" key="6">
    <source>
        <dbReference type="UniProtKB" id="P17763"/>
    </source>
</evidence>
<evidence type="ECO:0000250" key="7">
    <source>
        <dbReference type="UniProtKB" id="P29990"/>
    </source>
</evidence>
<evidence type="ECO:0000250" key="8">
    <source>
        <dbReference type="UniProtKB" id="P29991"/>
    </source>
</evidence>
<evidence type="ECO:0000250" key="9">
    <source>
        <dbReference type="UniProtKB" id="Q32ZE1"/>
    </source>
</evidence>
<evidence type="ECO:0000250" key="10">
    <source>
        <dbReference type="UniProtKB" id="Q6YMS4"/>
    </source>
</evidence>
<evidence type="ECO:0000250" key="11">
    <source>
        <dbReference type="UniProtKB" id="Q9Q6P4"/>
    </source>
</evidence>
<evidence type="ECO:0000255" key="12"/>
<evidence type="ECO:0000255" key="13">
    <source>
        <dbReference type="PROSITE-ProRule" id="PRU00498"/>
    </source>
</evidence>
<evidence type="ECO:0000255" key="14">
    <source>
        <dbReference type="PROSITE-ProRule" id="PRU00539"/>
    </source>
</evidence>
<evidence type="ECO:0000255" key="15">
    <source>
        <dbReference type="PROSITE-ProRule" id="PRU00541"/>
    </source>
</evidence>
<evidence type="ECO:0000255" key="16">
    <source>
        <dbReference type="PROSITE-ProRule" id="PRU00859"/>
    </source>
</evidence>
<evidence type="ECO:0000255" key="17">
    <source>
        <dbReference type="PROSITE-ProRule" id="PRU00860"/>
    </source>
</evidence>
<evidence type="ECO:0000255" key="18">
    <source>
        <dbReference type="PROSITE-ProRule" id="PRU00924"/>
    </source>
</evidence>
<evidence type="ECO:0007829" key="19">
    <source>
        <dbReference type="PDB" id="4AM0"/>
    </source>
</evidence>
<evidence type="ECO:0007829" key="20">
    <source>
        <dbReference type="PDB" id="7VMV"/>
    </source>
</evidence>
<evidence type="ECO:0007829" key="21">
    <source>
        <dbReference type="PDB" id="8WBB"/>
    </source>
</evidence>
<evidence type="ECO:0007829" key="22">
    <source>
        <dbReference type="PDB" id="8WBC"/>
    </source>
</evidence>
<evidence type="ECO:0007829" key="23">
    <source>
        <dbReference type="PDB" id="8WBE"/>
    </source>
</evidence>
<proteinExistence type="evidence at protein level"/>